<feature type="chain" id="PRO_0000099501" description="Protein F11 homolog">
    <location>
        <begin position="1"/>
        <end position="451"/>
    </location>
</feature>
<feature type="region of interest" description="Disordered" evidence="2">
    <location>
        <begin position="1"/>
        <end position="20"/>
    </location>
</feature>
<feature type="compositionally biased region" description="Basic and acidic residues" evidence="2">
    <location>
        <begin position="1"/>
        <end position="12"/>
    </location>
</feature>
<keyword id="KW-1185">Reference proteome</keyword>
<protein>
    <recommendedName>
        <fullName>Protein F11 homolog</fullName>
    </recommendedName>
</protein>
<dbReference type="EMBL" id="AF198100">
    <property type="protein sequence ID" value="AAF44454.1"/>
    <property type="molecule type" value="Genomic_DNA"/>
</dbReference>
<dbReference type="EMBL" id="M88588">
    <property type="protein sequence ID" value="AAA47188.1"/>
    <property type="molecule type" value="Genomic_DNA"/>
</dbReference>
<dbReference type="PIR" id="PQ0506">
    <property type="entry name" value="PQ0506"/>
</dbReference>
<dbReference type="RefSeq" id="NP_039073.1">
    <property type="nucleotide sequence ID" value="NC_002188.1"/>
</dbReference>
<dbReference type="SMR" id="P36700"/>
<dbReference type="GeneID" id="1486658"/>
<dbReference type="KEGG" id="vg:1486658"/>
<dbReference type="Proteomes" id="UP000008597">
    <property type="component" value="Segment"/>
</dbReference>
<dbReference type="InterPro" id="IPR007027">
    <property type="entry name" value="Poxvirus_F11"/>
</dbReference>
<dbReference type="Pfam" id="PF04943">
    <property type="entry name" value="Pox_F11"/>
    <property type="match status" value="1"/>
</dbReference>
<evidence type="ECO:0000250" key="1"/>
<evidence type="ECO:0000256" key="2">
    <source>
        <dbReference type="SAM" id="MobiDB-lite"/>
    </source>
</evidence>
<evidence type="ECO:0000305" key="3"/>
<organism>
    <name type="scientific">Fowlpox virus (strain NVSL)</name>
    <name type="common">FPV</name>
    <dbReference type="NCBI Taxonomy" id="928301"/>
    <lineage>
        <taxon>Viruses</taxon>
        <taxon>Varidnaviria</taxon>
        <taxon>Bamfordvirae</taxon>
        <taxon>Nucleocytoviricota</taxon>
        <taxon>Pokkesviricetes</taxon>
        <taxon>Chitovirales</taxon>
        <taxon>Poxviridae</taxon>
        <taxon>Chordopoxvirinae</taxon>
        <taxon>Avipoxvirus</taxon>
        <taxon>Fowlpox virus</taxon>
    </lineage>
</organism>
<organismHost>
    <name type="scientific">Vertebrata</name>
    <dbReference type="NCBI Taxonomy" id="7742"/>
</organismHost>
<proteinExistence type="inferred from homology"/>
<accession>P36700</accession>
<accession>Q9J5B2</accession>
<comment type="function">
    <text evidence="1">Stimulates increases in peripheral microtubule dynamics and may increase the motility of the infected cells, contributing to cell-to-cell spread of the virus.</text>
</comment>
<comment type="similarity">
    <text evidence="3">Belongs to the poxviridae F11 protein family.</text>
</comment>
<name>F11_FOWPN</name>
<reference key="1">
    <citation type="journal article" date="2000" name="J. Virol.">
        <title>The genome of fowlpox virus.</title>
        <authorList>
            <person name="Afonso C.L."/>
            <person name="Tulman E.R."/>
            <person name="Lu Z."/>
            <person name="Zsak L."/>
            <person name="Kutish G.F."/>
            <person name="Rock D.L."/>
        </authorList>
    </citation>
    <scope>NUCLEOTIDE SEQUENCE [LARGE SCALE GENOMIC DNA]</scope>
</reference>
<reference key="2">
    <citation type="journal article" date="1993" name="J. Gen. Virol.">
        <title>Insertional inactivation of a fowlpox virus homologue of the vaccinia virus F12L gene inhibits the release of enveloped virions.</title>
        <authorList>
            <person name="Ogawa R."/>
            <person name="Calvert J.G."/>
            <person name="Yanagida N."/>
            <person name="Nazerian K."/>
        </authorList>
    </citation>
    <scope>NUCLEOTIDE SEQUENCE [GENOMIC DNA] OF 1-151</scope>
</reference>
<sequence>MDTNRKRSLDEHDTGEESPGKLQIVEINDEEDITFTDNPYYKLVKSRDNSINLVPLVGCVMIKINDIKGVTDKVNKLLPKTSSKTNSTSCINIPIDSIPLNFLDDGNKYFNVSEVSILQVSHGNDMMNIDKYVDGSFDYIAVLCLKNSGRSVIMLNHCNKQHVMQDNFCLIFRSFYGINILTQIIGESVYLLVKLSPSDLFKIRWSSVIDSNRFMGKKFYIRNLQEDACIEKMKNMEKDIYKNIEFIIINSVLLEDLKSRLDITRELNHTIDKMFNHNNNTLFSDIIKLSEEIIDKDFKNMEKMSDSVLADVKQISKTKNKLRERLLKAAISSKEVEEILSDIPVIEEGTIKQFSLNQRAVYDHYKKVIYKNNSSLDLGCMNIEKSYMFNLYKVYGQNEYMITYILNLINRVKKGMDAIKSNLGDIYKYNIDNINLVVSERINKVISGESL</sequence>
<gene>
    <name type="ordered locus">FPV110</name>
</gene>